<comment type="function">
    <text evidence="1">Destroys superoxide anion radicals which are normally produced within the cells and which are toxic to biological systems. Catalyzes the dismutation of superoxide anion radicals into O2 and H2O2 by successive reduction and oxidation of the transition metal ion at the active site.</text>
</comment>
<comment type="catalytic activity">
    <reaction evidence="1">
        <text>2 superoxide + 2 H(+) = H2O2 + O2</text>
        <dbReference type="Rhea" id="RHEA:20696"/>
        <dbReference type="ChEBI" id="CHEBI:15378"/>
        <dbReference type="ChEBI" id="CHEBI:15379"/>
        <dbReference type="ChEBI" id="CHEBI:16240"/>
        <dbReference type="ChEBI" id="CHEBI:18421"/>
        <dbReference type="EC" id="1.15.1.1"/>
    </reaction>
    <physiologicalReaction direction="left-to-right" evidence="1">
        <dbReference type="Rhea" id="RHEA:20697"/>
    </physiologicalReaction>
</comment>
<comment type="cofactor">
    <cofactor evidence="1">
        <name>Mn(2+)</name>
        <dbReference type="ChEBI" id="CHEBI:29035"/>
    </cofactor>
    <cofactor evidence="1">
        <name>Fe(3+)</name>
        <dbReference type="ChEBI" id="CHEBI:29034"/>
    </cofactor>
    <text evidence="1">Binds 1 Mn(2+) or Fe(3+) ion per subunit.</text>
</comment>
<comment type="subunit">
    <text>Homodimer.</text>
</comment>
<comment type="similarity">
    <text evidence="2">Belongs to the iron/manganese superoxide dismutase family.</text>
</comment>
<protein>
    <recommendedName>
        <fullName>Superoxide dismutase [Mn/Fe]</fullName>
        <ecNumber evidence="1">1.15.1.1</ecNumber>
    </recommendedName>
</protein>
<gene>
    <name type="primary">sodB</name>
</gene>
<feature type="chain" id="PRO_0000159988" description="Superoxide dismutase [Mn/Fe]">
    <location>
        <begin position="1"/>
        <end position="202"/>
    </location>
</feature>
<feature type="binding site" evidence="1">
    <location>
        <position position="26"/>
    </location>
    <ligand>
        <name>Fe(3+)</name>
        <dbReference type="ChEBI" id="CHEBI:29034"/>
    </ligand>
</feature>
<feature type="binding site" evidence="1">
    <location>
        <position position="26"/>
    </location>
    <ligand>
        <name>Mn(2+)</name>
        <dbReference type="ChEBI" id="CHEBI:29035"/>
    </ligand>
</feature>
<feature type="binding site" evidence="1">
    <location>
        <position position="80"/>
    </location>
    <ligand>
        <name>Fe(3+)</name>
        <dbReference type="ChEBI" id="CHEBI:29034"/>
    </ligand>
</feature>
<feature type="binding site" evidence="1">
    <location>
        <position position="80"/>
    </location>
    <ligand>
        <name>Mn(2+)</name>
        <dbReference type="ChEBI" id="CHEBI:29035"/>
    </ligand>
</feature>
<feature type="binding site" evidence="1">
    <location>
        <position position="163"/>
    </location>
    <ligand>
        <name>Fe(3+)</name>
        <dbReference type="ChEBI" id="CHEBI:29034"/>
    </ligand>
</feature>
<feature type="binding site" evidence="1">
    <location>
        <position position="163"/>
    </location>
    <ligand>
        <name>Mn(2+)</name>
        <dbReference type="ChEBI" id="CHEBI:29035"/>
    </ligand>
</feature>
<feature type="binding site" evidence="1">
    <location>
        <position position="167"/>
    </location>
    <ligand>
        <name>Fe(3+)</name>
        <dbReference type="ChEBI" id="CHEBI:29034"/>
    </ligand>
</feature>
<feature type="binding site" evidence="1">
    <location>
        <position position="167"/>
    </location>
    <ligand>
        <name>Mn(2+)</name>
        <dbReference type="ChEBI" id="CHEBI:29035"/>
    </ligand>
</feature>
<reference key="1">
    <citation type="journal article" date="1991" name="Biochemistry">
        <title>Iron- and manganese-containing superoxide dismutases from Methylomonas J: identity of the protein moiety and amino acid sequence.</title>
        <authorList>
            <person name="Matsumoto T."/>
            <person name="Terauchi K."/>
            <person name="Isobe T."/>
            <person name="Matsuoka K."/>
            <person name="Yamakura F."/>
        </authorList>
    </citation>
    <scope>PROTEIN SEQUENCE</scope>
</reference>
<reference key="2">
    <citation type="journal article" date="1991" name="Free Radic. Res. Commun.">
        <title>Isolation of Mn-SOD and low active Fe-SOD from Methylomonas J; consisting of identical proteins.</title>
        <authorList>
            <person name="Yamakura F."/>
            <person name="Matsumoto T."/>
            <person name="Terauchi K."/>
        </authorList>
    </citation>
    <scope>CHARACTERIZATION</scope>
    <scope>PROTEIN SEQUENCE OF 1-32</scope>
</reference>
<dbReference type="EC" id="1.15.1.1" evidence="1"/>
<dbReference type="SMR" id="P23744"/>
<dbReference type="GO" id="GO:0005737">
    <property type="term" value="C:cytoplasm"/>
    <property type="evidence" value="ECO:0007669"/>
    <property type="project" value="TreeGrafter"/>
</dbReference>
<dbReference type="GO" id="GO:0046872">
    <property type="term" value="F:metal ion binding"/>
    <property type="evidence" value="ECO:0007669"/>
    <property type="project" value="UniProtKB-KW"/>
</dbReference>
<dbReference type="GO" id="GO:0004784">
    <property type="term" value="F:superoxide dismutase activity"/>
    <property type="evidence" value="ECO:0007669"/>
    <property type="project" value="UniProtKB-EC"/>
</dbReference>
<dbReference type="FunFam" id="1.10.287.990:FF:000001">
    <property type="entry name" value="Superoxide dismutase"/>
    <property type="match status" value="1"/>
</dbReference>
<dbReference type="FunFam" id="3.55.40.20:FF:000001">
    <property type="entry name" value="Superoxide dismutase"/>
    <property type="match status" value="1"/>
</dbReference>
<dbReference type="Gene3D" id="1.10.287.990">
    <property type="entry name" value="Fe,Mn superoxide dismutase (SOD) domain"/>
    <property type="match status" value="1"/>
</dbReference>
<dbReference type="Gene3D" id="3.55.40.20">
    <property type="entry name" value="Iron/manganese superoxide dismutase, C-terminal domain"/>
    <property type="match status" value="1"/>
</dbReference>
<dbReference type="InterPro" id="IPR001189">
    <property type="entry name" value="Mn/Fe_SOD"/>
</dbReference>
<dbReference type="InterPro" id="IPR019833">
    <property type="entry name" value="Mn/Fe_SOD_BS"/>
</dbReference>
<dbReference type="InterPro" id="IPR019832">
    <property type="entry name" value="Mn/Fe_SOD_C"/>
</dbReference>
<dbReference type="InterPro" id="IPR019831">
    <property type="entry name" value="Mn/Fe_SOD_N"/>
</dbReference>
<dbReference type="InterPro" id="IPR036324">
    <property type="entry name" value="Mn/Fe_SOD_N_sf"/>
</dbReference>
<dbReference type="InterPro" id="IPR036314">
    <property type="entry name" value="SOD_C_sf"/>
</dbReference>
<dbReference type="PANTHER" id="PTHR43595">
    <property type="entry name" value="37S RIBOSOMAL PROTEIN S26, MITOCHONDRIAL"/>
    <property type="match status" value="1"/>
</dbReference>
<dbReference type="PANTHER" id="PTHR43595:SF2">
    <property type="entry name" value="SMALL RIBOSOMAL SUBUNIT PROTEIN MS42"/>
    <property type="match status" value="1"/>
</dbReference>
<dbReference type="Pfam" id="PF02777">
    <property type="entry name" value="Sod_Fe_C"/>
    <property type="match status" value="1"/>
</dbReference>
<dbReference type="Pfam" id="PF00081">
    <property type="entry name" value="Sod_Fe_N"/>
    <property type="match status" value="1"/>
</dbReference>
<dbReference type="PIRSF" id="PIRSF000349">
    <property type="entry name" value="SODismutase"/>
    <property type="match status" value="1"/>
</dbReference>
<dbReference type="PRINTS" id="PR01703">
    <property type="entry name" value="MNSODISMTASE"/>
</dbReference>
<dbReference type="SUPFAM" id="SSF54719">
    <property type="entry name" value="Fe,Mn superoxide dismutase (SOD), C-terminal domain"/>
    <property type="match status" value="1"/>
</dbReference>
<dbReference type="SUPFAM" id="SSF46609">
    <property type="entry name" value="Fe,Mn superoxide dismutase (SOD), N-terminal domain"/>
    <property type="match status" value="1"/>
</dbReference>
<dbReference type="PROSITE" id="PS00088">
    <property type="entry name" value="SOD_MN"/>
    <property type="match status" value="1"/>
</dbReference>
<organism>
    <name type="scientific">Methylomonas sp. (strain J)</name>
    <dbReference type="NCBI Taxonomy" id="32038"/>
    <lineage>
        <taxon>Bacteria</taxon>
        <taxon>Pseudomonadati</taxon>
        <taxon>Pseudomonadota</taxon>
        <taxon>Gammaproteobacteria</taxon>
        <taxon>Methylococcales</taxon>
        <taxon>Methylococcaceae</taxon>
        <taxon>Methylomonas</taxon>
    </lineage>
</organism>
<sequence>AYTLPPLDYAYTALEPHIDAQTMEIHHTKHHQTYINNVNAALEGTSFANEPVEALLQKLDSLPENLRGPVRNNGGGHANHSLFWKVLTPNGGGEPKGALADAIKSDIGGLDTFKEAFTKAALTRFGSGWAWLSVTPEKKLVVESTGNQDSPLSTGNTPILGLDVWEHAYYLKYQNRRPEYIGAFFNVVNWDEVSRRYQEALA</sequence>
<keyword id="KW-0903">Direct protein sequencing</keyword>
<keyword id="KW-0408">Iron</keyword>
<keyword id="KW-0464">Manganese</keyword>
<keyword id="KW-0479">Metal-binding</keyword>
<keyword id="KW-0560">Oxidoreductase</keyword>
<evidence type="ECO:0000250" key="1">
    <source>
        <dbReference type="UniProtKB" id="P80293"/>
    </source>
</evidence>
<evidence type="ECO:0000305" key="2"/>
<proteinExistence type="evidence at protein level"/>
<accession>P23744</accession>
<name>SODF_METJ</name>